<accession>Q8G1A9</accession>
<accession>G0K8V8</accession>
<feature type="chain" id="PRO_0000250886" description="NADH-quinone oxidoreductase subunit I">
    <location>
        <begin position="1"/>
        <end position="163"/>
    </location>
</feature>
<feature type="domain" description="4Fe-4S ferredoxin-type 1" evidence="1">
    <location>
        <begin position="53"/>
        <end position="83"/>
    </location>
</feature>
<feature type="domain" description="4Fe-4S ferredoxin-type 2" evidence="1">
    <location>
        <begin position="94"/>
        <end position="123"/>
    </location>
</feature>
<feature type="binding site" evidence="1">
    <location>
        <position position="63"/>
    </location>
    <ligand>
        <name>[4Fe-4S] cluster</name>
        <dbReference type="ChEBI" id="CHEBI:49883"/>
        <label>1</label>
    </ligand>
</feature>
<feature type="binding site" evidence="1">
    <location>
        <position position="66"/>
    </location>
    <ligand>
        <name>[4Fe-4S] cluster</name>
        <dbReference type="ChEBI" id="CHEBI:49883"/>
        <label>1</label>
    </ligand>
</feature>
<feature type="binding site" evidence="1">
    <location>
        <position position="69"/>
    </location>
    <ligand>
        <name>[4Fe-4S] cluster</name>
        <dbReference type="ChEBI" id="CHEBI:49883"/>
        <label>1</label>
    </ligand>
</feature>
<feature type="binding site" evidence="1">
    <location>
        <position position="73"/>
    </location>
    <ligand>
        <name>[4Fe-4S] cluster</name>
        <dbReference type="ChEBI" id="CHEBI:49883"/>
        <label>2</label>
    </ligand>
</feature>
<feature type="binding site" evidence="1">
    <location>
        <position position="103"/>
    </location>
    <ligand>
        <name>[4Fe-4S] cluster</name>
        <dbReference type="ChEBI" id="CHEBI:49883"/>
        <label>2</label>
    </ligand>
</feature>
<feature type="binding site" evidence="1">
    <location>
        <position position="106"/>
    </location>
    <ligand>
        <name>[4Fe-4S] cluster</name>
        <dbReference type="ChEBI" id="CHEBI:49883"/>
        <label>2</label>
    </ligand>
</feature>
<feature type="binding site" evidence="1">
    <location>
        <position position="109"/>
    </location>
    <ligand>
        <name>[4Fe-4S] cluster</name>
        <dbReference type="ChEBI" id="CHEBI:49883"/>
        <label>2</label>
    </ligand>
</feature>
<feature type="binding site" evidence="1">
    <location>
        <position position="113"/>
    </location>
    <ligand>
        <name>[4Fe-4S] cluster</name>
        <dbReference type="ChEBI" id="CHEBI:49883"/>
        <label>1</label>
    </ligand>
</feature>
<gene>
    <name evidence="1" type="primary">nuoI</name>
    <name type="ordered locus">BR0810</name>
    <name type="ordered locus">BS1330_I0806</name>
</gene>
<dbReference type="EC" id="7.1.1.-" evidence="1"/>
<dbReference type="EMBL" id="AE014291">
    <property type="protein sequence ID" value="AAN29739.1"/>
    <property type="molecule type" value="Genomic_DNA"/>
</dbReference>
<dbReference type="EMBL" id="CP002997">
    <property type="protein sequence ID" value="AEM18156.1"/>
    <property type="molecule type" value="Genomic_DNA"/>
</dbReference>
<dbReference type="RefSeq" id="WP_004690757.1">
    <property type="nucleotide sequence ID" value="NZ_KN046804.1"/>
</dbReference>
<dbReference type="SMR" id="Q8G1A9"/>
<dbReference type="GeneID" id="55590522"/>
<dbReference type="KEGG" id="bms:BR0810"/>
<dbReference type="KEGG" id="bsi:BS1330_I0806"/>
<dbReference type="PATRIC" id="fig|204722.21.peg.1633"/>
<dbReference type="HOGENOM" id="CLU_067218_5_1_5"/>
<dbReference type="PhylomeDB" id="Q8G1A9"/>
<dbReference type="Proteomes" id="UP000007104">
    <property type="component" value="Chromosome I"/>
</dbReference>
<dbReference type="GO" id="GO:0005886">
    <property type="term" value="C:plasma membrane"/>
    <property type="evidence" value="ECO:0007669"/>
    <property type="project" value="UniProtKB-SubCell"/>
</dbReference>
<dbReference type="GO" id="GO:0051539">
    <property type="term" value="F:4 iron, 4 sulfur cluster binding"/>
    <property type="evidence" value="ECO:0007669"/>
    <property type="project" value="UniProtKB-KW"/>
</dbReference>
<dbReference type="GO" id="GO:0005506">
    <property type="term" value="F:iron ion binding"/>
    <property type="evidence" value="ECO:0007669"/>
    <property type="project" value="UniProtKB-UniRule"/>
</dbReference>
<dbReference type="GO" id="GO:0050136">
    <property type="term" value="F:NADH:ubiquinone reductase (non-electrogenic) activity"/>
    <property type="evidence" value="ECO:0007669"/>
    <property type="project" value="UniProtKB-UniRule"/>
</dbReference>
<dbReference type="GO" id="GO:0048038">
    <property type="term" value="F:quinone binding"/>
    <property type="evidence" value="ECO:0007669"/>
    <property type="project" value="UniProtKB-KW"/>
</dbReference>
<dbReference type="GO" id="GO:0009060">
    <property type="term" value="P:aerobic respiration"/>
    <property type="evidence" value="ECO:0007669"/>
    <property type="project" value="TreeGrafter"/>
</dbReference>
<dbReference type="FunFam" id="3.30.70.3270:FF:000001">
    <property type="entry name" value="NADH-quinone oxidoreductase subunit I 1"/>
    <property type="match status" value="1"/>
</dbReference>
<dbReference type="Gene3D" id="3.30.70.3270">
    <property type="match status" value="1"/>
</dbReference>
<dbReference type="HAMAP" id="MF_01351">
    <property type="entry name" value="NDH1_NuoI"/>
    <property type="match status" value="1"/>
</dbReference>
<dbReference type="InterPro" id="IPR017896">
    <property type="entry name" value="4Fe4S_Fe-S-bd"/>
</dbReference>
<dbReference type="InterPro" id="IPR017900">
    <property type="entry name" value="4Fe4S_Fe_S_CS"/>
</dbReference>
<dbReference type="InterPro" id="IPR010226">
    <property type="entry name" value="NADH_quinone_OxRdtase_chainI"/>
</dbReference>
<dbReference type="NCBIfam" id="TIGR01971">
    <property type="entry name" value="NuoI"/>
    <property type="match status" value="1"/>
</dbReference>
<dbReference type="NCBIfam" id="NF004538">
    <property type="entry name" value="PRK05888.1-4"/>
    <property type="match status" value="1"/>
</dbReference>
<dbReference type="NCBIfam" id="NF004539">
    <property type="entry name" value="PRK05888.1-5"/>
    <property type="match status" value="1"/>
</dbReference>
<dbReference type="PANTHER" id="PTHR10849:SF20">
    <property type="entry name" value="NADH DEHYDROGENASE [UBIQUINONE] IRON-SULFUR PROTEIN 8, MITOCHONDRIAL"/>
    <property type="match status" value="1"/>
</dbReference>
<dbReference type="PANTHER" id="PTHR10849">
    <property type="entry name" value="NADH DEHYDROGENASE UBIQUINONE IRON-SULFUR PROTEIN 8, MITOCHONDRIAL"/>
    <property type="match status" value="1"/>
</dbReference>
<dbReference type="Pfam" id="PF12838">
    <property type="entry name" value="Fer4_7"/>
    <property type="match status" value="1"/>
</dbReference>
<dbReference type="SUPFAM" id="SSF54862">
    <property type="entry name" value="4Fe-4S ferredoxins"/>
    <property type="match status" value="1"/>
</dbReference>
<dbReference type="PROSITE" id="PS00198">
    <property type="entry name" value="4FE4S_FER_1"/>
    <property type="match status" value="2"/>
</dbReference>
<dbReference type="PROSITE" id="PS51379">
    <property type="entry name" value="4FE4S_FER_2"/>
    <property type="match status" value="2"/>
</dbReference>
<keyword id="KW-0004">4Fe-4S</keyword>
<keyword id="KW-0997">Cell inner membrane</keyword>
<keyword id="KW-1003">Cell membrane</keyword>
<keyword id="KW-0408">Iron</keyword>
<keyword id="KW-0411">Iron-sulfur</keyword>
<keyword id="KW-0472">Membrane</keyword>
<keyword id="KW-0479">Metal-binding</keyword>
<keyword id="KW-0520">NAD</keyword>
<keyword id="KW-0874">Quinone</keyword>
<keyword id="KW-0677">Repeat</keyword>
<keyword id="KW-1278">Translocase</keyword>
<keyword id="KW-0830">Ubiquinone</keyword>
<protein>
    <recommendedName>
        <fullName evidence="1">NADH-quinone oxidoreductase subunit I</fullName>
        <ecNumber evidence="1">7.1.1.-</ecNumber>
    </recommendedName>
    <alternativeName>
        <fullName evidence="1">NADH dehydrogenase I subunit I</fullName>
    </alternativeName>
    <alternativeName>
        <fullName evidence="1">NDH-1 subunit I</fullName>
    </alternativeName>
</protein>
<organism>
    <name type="scientific">Brucella suis biovar 1 (strain 1330)</name>
    <dbReference type="NCBI Taxonomy" id="204722"/>
    <lineage>
        <taxon>Bacteria</taxon>
        <taxon>Pseudomonadati</taxon>
        <taxon>Pseudomonadota</taxon>
        <taxon>Alphaproteobacteria</taxon>
        <taxon>Hyphomicrobiales</taxon>
        <taxon>Brucellaceae</taxon>
        <taxon>Brucella/Ochrobactrum group</taxon>
        <taxon>Brucella</taxon>
    </lineage>
</organism>
<reference key="1">
    <citation type="journal article" date="2002" name="Proc. Natl. Acad. Sci. U.S.A.">
        <title>The Brucella suis genome reveals fundamental similarities between animal and plant pathogens and symbionts.</title>
        <authorList>
            <person name="Paulsen I.T."/>
            <person name="Seshadri R."/>
            <person name="Nelson K.E."/>
            <person name="Eisen J.A."/>
            <person name="Heidelberg J.F."/>
            <person name="Read T.D."/>
            <person name="Dodson R.J."/>
            <person name="Umayam L.A."/>
            <person name="Brinkac L.M."/>
            <person name="Beanan M.J."/>
            <person name="Daugherty S.C."/>
            <person name="DeBoy R.T."/>
            <person name="Durkin A.S."/>
            <person name="Kolonay J.F."/>
            <person name="Madupu R."/>
            <person name="Nelson W.C."/>
            <person name="Ayodeji B."/>
            <person name="Kraul M."/>
            <person name="Shetty J."/>
            <person name="Malek J.A."/>
            <person name="Van Aken S.E."/>
            <person name="Riedmuller S."/>
            <person name="Tettelin H."/>
            <person name="Gill S.R."/>
            <person name="White O."/>
            <person name="Salzberg S.L."/>
            <person name="Hoover D.L."/>
            <person name="Lindler L.E."/>
            <person name="Halling S.M."/>
            <person name="Boyle S.M."/>
            <person name="Fraser C.M."/>
        </authorList>
    </citation>
    <scope>NUCLEOTIDE SEQUENCE [LARGE SCALE GENOMIC DNA]</scope>
    <source>
        <strain>1330</strain>
    </source>
</reference>
<reference key="2">
    <citation type="journal article" date="2011" name="J. Bacteriol.">
        <title>Revised genome sequence of Brucella suis 1330.</title>
        <authorList>
            <person name="Tae H."/>
            <person name="Shallom S."/>
            <person name="Settlage R."/>
            <person name="Preston D."/>
            <person name="Adams L.G."/>
            <person name="Garner H.R."/>
        </authorList>
    </citation>
    <scope>NUCLEOTIDE SEQUENCE [LARGE SCALE GENOMIC DNA]</scope>
    <source>
        <strain>1330</strain>
    </source>
</reference>
<evidence type="ECO:0000255" key="1">
    <source>
        <dbReference type="HAMAP-Rule" id="MF_01351"/>
    </source>
</evidence>
<name>NUOI_BRUSU</name>
<sequence>MASITQAAKSLLLKEFASAFALSMRQFFAPKATLNYPHEKGPVSPRFRGEHALRRYPNGEERCIACKLCEAICPAQAITIEAGPRRNDGTRRTVRYDIDMVKCIYCGFCQEACPVDAIVEGPNFEFATETREELYYDKDKLLANGDRWEREIARNIAMDAPYR</sequence>
<proteinExistence type="inferred from homology"/>
<comment type="function">
    <text evidence="1">NDH-1 shuttles electrons from NADH, via FMN and iron-sulfur (Fe-S) centers, to quinones in the respiratory chain. The immediate electron acceptor for the enzyme in this species is believed to be ubiquinone. Couples the redox reaction to proton translocation (for every two electrons transferred, four hydrogen ions are translocated across the cytoplasmic membrane), and thus conserves the redox energy in a proton gradient.</text>
</comment>
<comment type="catalytic activity">
    <reaction evidence="1">
        <text>a quinone + NADH + 5 H(+)(in) = a quinol + NAD(+) + 4 H(+)(out)</text>
        <dbReference type="Rhea" id="RHEA:57888"/>
        <dbReference type="ChEBI" id="CHEBI:15378"/>
        <dbReference type="ChEBI" id="CHEBI:24646"/>
        <dbReference type="ChEBI" id="CHEBI:57540"/>
        <dbReference type="ChEBI" id="CHEBI:57945"/>
        <dbReference type="ChEBI" id="CHEBI:132124"/>
    </reaction>
</comment>
<comment type="cofactor">
    <cofactor evidence="1">
        <name>[4Fe-4S] cluster</name>
        <dbReference type="ChEBI" id="CHEBI:49883"/>
    </cofactor>
    <text evidence="1">Binds 2 [4Fe-4S] clusters per subunit.</text>
</comment>
<comment type="subunit">
    <text evidence="1">NDH-1 is composed of 14 different subunits. Subunits NuoA, H, J, K, L, M, N constitute the membrane sector of the complex.</text>
</comment>
<comment type="subcellular location">
    <subcellularLocation>
        <location evidence="1">Cell inner membrane</location>
        <topology evidence="1">Peripheral membrane protein</topology>
    </subcellularLocation>
</comment>
<comment type="similarity">
    <text evidence="1">Belongs to the complex I 23 kDa subunit family.</text>
</comment>